<organism>
    <name type="scientific">Bacteroides thetaiotaomicron (strain ATCC 29148 / DSM 2079 / JCM 5827 / CCUG 10774 / NCTC 10582 / VPI-5482 / E50)</name>
    <dbReference type="NCBI Taxonomy" id="226186"/>
    <lineage>
        <taxon>Bacteria</taxon>
        <taxon>Pseudomonadati</taxon>
        <taxon>Bacteroidota</taxon>
        <taxon>Bacteroidia</taxon>
        <taxon>Bacteroidales</taxon>
        <taxon>Bacteroidaceae</taxon>
        <taxon>Bacteroides</taxon>
    </lineage>
</organism>
<evidence type="ECO:0000255" key="1">
    <source>
        <dbReference type="HAMAP-Rule" id="MF_01576"/>
    </source>
</evidence>
<protein>
    <recommendedName>
        <fullName evidence="1">Bifunctional protein FolD</fullName>
    </recommendedName>
    <domain>
        <recommendedName>
            <fullName evidence="1">Methylenetetrahydrofolate dehydrogenase</fullName>
            <ecNumber evidence="1">1.5.1.5</ecNumber>
        </recommendedName>
    </domain>
    <domain>
        <recommendedName>
            <fullName evidence="1">Methenyltetrahydrofolate cyclohydrolase</fullName>
            <ecNumber evidence="1">3.5.4.9</ecNumber>
        </recommendedName>
    </domain>
</protein>
<name>FOLD_BACTN</name>
<gene>
    <name evidence="1" type="primary">folD</name>
    <name type="ordered locus">BT_1607</name>
</gene>
<reference key="1">
    <citation type="journal article" date="2003" name="Science">
        <title>A genomic view of the human-Bacteroides thetaiotaomicron symbiosis.</title>
        <authorList>
            <person name="Xu J."/>
            <person name="Bjursell M.K."/>
            <person name="Himrod J."/>
            <person name="Deng S."/>
            <person name="Carmichael L.K."/>
            <person name="Chiang H.C."/>
            <person name="Hooper L.V."/>
            <person name="Gordon J.I."/>
        </authorList>
    </citation>
    <scope>NUCLEOTIDE SEQUENCE [LARGE SCALE GENOMIC DNA]</scope>
    <source>
        <strain>ATCC 29148 / DSM 2079 / JCM 5827 / CCUG 10774 / NCTC 10582 / VPI-5482 / E50</strain>
    </source>
</reference>
<feature type="chain" id="PRO_0000268275" description="Bifunctional protein FolD">
    <location>
        <begin position="1"/>
        <end position="293"/>
    </location>
</feature>
<feature type="binding site" evidence="1">
    <location>
        <begin position="164"/>
        <end position="166"/>
    </location>
    <ligand>
        <name>NADP(+)</name>
        <dbReference type="ChEBI" id="CHEBI:58349"/>
    </ligand>
</feature>
<feature type="binding site" evidence="1">
    <location>
        <position position="193"/>
    </location>
    <ligand>
        <name>NADP(+)</name>
        <dbReference type="ChEBI" id="CHEBI:58349"/>
    </ligand>
</feature>
<feature type="binding site" evidence="1">
    <location>
        <position position="234"/>
    </location>
    <ligand>
        <name>NADP(+)</name>
        <dbReference type="ChEBI" id="CHEBI:58349"/>
    </ligand>
</feature>
<dbReference type="EC" id="1.5.1.5" evidence="1"/>
<dbReference type="EC" id="3.5.4.9" evidence="1"/>
<dbReference type="EMBL" id="AE015928">
    <property type="protein sequence ID" value="AAO76714.1"/>
    <property type="molecule type" value="Genomic_DNA"/>
</dbReference>
<dbReference type="RefSeq" id="NP_810520.1">
    <property type="nucleotide sequence ID" value="NC_004663.1"/>
</dbReference>
<dbReference type="RefSeq" id="WP_008767914.1">
    <property type="nucleotide sequence ID" value="NZ_UYXG01000006.1"/>
</dbReference>
<dbReference type="SMR" id="Q8A7B8"/>
<dbReference type="FunCoup" id="Q8A7B8">
    <property type="interactions" value="492"/>
</dbReference>
<dbReference type="STRING" id="226186.BT_1607"/>
<dbReference type="PaxDb" id="226186-BT_1607"/>
<dbReference type="EnsemblBacteria" id="AAO76714">
    <property type="protein sequence ID" value="AAO76714"/>
    <property type="gene ID" value="BT_1607"/>
</dbReference>
<dbReference type="GeneID" id="60927591"/>
<dbReference type="KEGG" id="bth:BT_1607"/>
<dbReference type="PATRIC" id="fig|226186.12.peg.1646"/>
<dbReference type="eggNOG" id="COG0190">
    <property type="taxonomic scope" value="Bacteria"/>
</dbReference>
<dbReference type="HOGENOM" id="CLU_034045_2_1_10"/>
<dbReference type="InParanoid" id="Q8A7B8"/>
<dbReference type="OrthoDB" id="9803580at2"/>
<dbReference type="UniPathway" id="UPA00193"/>
<dbReference type="Proteomes" id="UP000001414">
    <property type="component" value="Chromosome"/>
</dbReference>
<dbReference type="GO" id="GO:0005829">
    <property type="term" value="C:cytosol"/>
    <property type="evidence" value="ECO:0000318"/>
    <property type="project" value="GO_Central"/>
</dbReference>
<dbReference type="GO" id="GO:0004477">
    <property type="term" value="F:methenyltetrahydrofolate cyclohydrolase activity"/>
    <property type="evidence" value="ECO:0000318"/>
    <property type="project" value="GO_Central"/>
</dbReference>
<dbReference type="GO" id="GO:0004488">
    <property type="term" value="F:methylenetetrahydrofolate dehydrogenase (NADP+) activity"/>
    <property type="evidence" value="ECO:0000318"/>
    <property type="project" value="GO_Central"/>
</dbReference>
<dbReference type="GO" id="GO:0000105">
    <property type="term" value="P:L-histidine biosynthetic process"/>
    <property type="evidence" value="ECO:0007669"/>
    <property type="project" value="UniProtKB-KW"/>
</dbReference>
<dbReference type="GO" id="GO:0009086">
    <property type="term" value="P:methionine biosynthetic process"/>
    <property type="evidence" value="ECO:0007669"/>
    <property type="project" value="UniProtKB-KW"/>
</dbReference>
<dbReference type="GO" id="GO:0006164">
    <property type="term" value="P:purine nucleotide biosynthetic process"/>
    <property type="evidence" value="ECO:0007669"/>
    <property type="project" value="UniProtKB-KW"/>
</dbReference>
<dbReference type="GO" id="GO:0035999">
    <property type="term" value="P:tetrahydrofolate interconversion"/>
    <property type="evidence" value="ECO:0000318"/>
    <property type="project" value="GO_Central"/>
</dbReference>
<dbReference type="CDD" id="cd01080">
    <property type="entry name" value="NAD_bind_m-THF_DH_Cyclohyd"/>
    <property type="match status" value="1"/>
</dbReference>
<dbReference type="FunFam" id="3.40.50.10860:FF:000001">
    <property type="entry name" value="Bifunctional protein FolD"/>
    <property type="match status" value="1"/>
</dbReference>
<dbReference type="FunFam" id="3.40.50.720:FF:000189">
    <property type="entry name" value="Bifunctional protein FolD"/>
    <property type="match status" value="1"/>
</dbReference>
<dbReference type="Gene3D" id="3.40.50.10860">
    <property type="entry name" value="Leucine Dehydrogenase, chain A, domain 1"/>
    <property type="match status" value="1"/>
</dbReference>
<dbReference type="Gene3D" id="3.40.50.720">
    <property type="entry name" value="NAD(P)-binding Rossmann-like Domain"/>
    <property type="match status" value="1"/>
</dbReference>
<dbReference type="HAMAP" id="MF_01576">
    <property type="entry name" value="THF_DHG_CYH"/>
    <property type="match status" value="1"/>
</dbReference>
<dbReference type="InterPro" id="IPR046346">
    <property type="entry name" value="Aminoacid_DH-like_N_sf"/>
</dbReference>
<dbReference type="InterPro" id="IPR036291">
    <property type="entry name" value="NAD(P)-bd_dom_sf"/>
</dbReference>
<dbReference type="InterPro" id="IPR000672">
    <property type="entry name" value="THF_DH/CycHdrlase"/>
</dbReference>
<dbReference type="InterPro" id="IPR020630">
    <property type="entry name" value="THF_DH/CycHdrlase_cat_dom"/>
</dbReference>
<dbReference type="InterPro" id="IPR020867">
    <property type="entry name" value="THF_DH/CycHdrlase_CS"/>
</dbReference>
<dbReference type="InterPro" id="IPR020631">
    <property type="entry name" value="THF_DH/CycHdrlase_NAD-bd_dom"/>
</dbReference>
<dbReference type="NCBIfam" id="NF010782">
    <property type="entry name" value="PRK14185.1"/>
    <property type="match status" value="1"/>
</dbReference>
<dbReference type="PANTHER" id="PTHR48099:SF5">
    <property type="entry name" value="C-1-TETRAHYDROFOLATE SYNTHASE, CYTOPLASMIC"/>
    <property type="match status" value="1"/>
</dbReference>
<dbReference type="PANTHER" id="PTHR48099">
    <property type="entry name" value="C-1-TETRAHYDROFOLATE SYNTHASE, CYTOPLASMIC-RELATED"/>
    <property type="match status" value="1"/>
</dbReference>
<dbReference type="Pfam" id="PF00763">
    <property type="entry name" value="THF_DHG_CYH"/>
    <property type="match status" value="1"/>
</dbReference>
<dbReference type="Pfam" id="PF02882">
    <property type="entry name" value="THF_DHG_CYH_C"/>
    <property type="match status" value="1"/>
</dbReference>
<dbReference type="PRINTS" id="PR00085">
    <property type="entry name" value="THFDHDRGNASE"/>
</dbReference>
<dbReference type="SUPFAM" id="SSF53223">
    <property type="entry name" value="Aminoacid dehydrogenase-like, N-terminal domain"/>
    <property type="match status" value="1"/>
</dbReference>
<dbReference type="SUPFAM" id="SSF51735">
    <property type="entry name" value="NAD(P)-binding Rossmann-fold domains"/>
    <property type="match status" value="1"/>
</dbReference>
<dbReference type="PROSITE" id="PS00766">
    <property type="entry name" value="THF_DHG_CYH_1"/>
    <property type="match status" value="1"/>
</dbReference>
<dbReference type="PROSITE" id="PS00767">
    <property type="entry name" value="THF_DHG_CYH_2"/>
    <property type="match status" value="1"/>
</dbReference>
<comment type="function">
    <text evidence="1">Catalyzes the oxidation of 5,10-methylenetetrahydrofolate to 5,10-methenyltetrahydrofolate and then the hydrolysis of 5,10-methenyltetrahydrofolate to 10-formyltetrahydrofolate.</text>
</comment>
<comment type="catalytic activity">
    <reaction evidence="1">
        <text>(6R)-5,10-methylene-5,6,7,8-tetrahydrofolate + NADP(+) = (6R)-5,10-methenyltetrahydrofolate + NADPH</text>
        <dbReference type="Rhea" id="RHEA:22812"/>
        <dbReference type="ChEBI" id="CHEBI:15636"/>
        <dbReference type="ChEBI" id="CHEBI:57455"/>
        <dbReference type="ChEBI" id="CHEBI:57783"/>
        <dbReference type="ChEBI" id="CHEBI:58349"/>
        <dbReference type="EC" id="1.5.1.5"/>
    </reaction>
</comment>
<comment type="catalytic activity">
    <reaction evidence="1">
        <text>(6R)-5,10-methenyltetrahydrofolate + H2O = (6R)-10-formyltetrahydrofolate + H(+)</text>
        <dbReference type="Rhea" id="RHEA:23700"/>
        <dbReference type="ChEBI" id="CHEBI:15377"/>
        <dbReference type="ChEBI" id="CHEBI:15378"/>
        <dbReference type="ChEBI" id="CHEBI:57455"/>
        <dbReference type="ChEBI" id="CHEBI:195366"/>
        <dbReference type="EC" id="3.5.4.9"/>
    </reaction>
</comment>
<comment type="pathway">
    <text evidence="1">One-carbon metabolism; tetrahydrofolate interconversion.</text>
</comment>
<comment type="subunit">
    <text evidence="1">Homodimer.</text>
</comment>
<comment type="similarity">
    <text evidence="1">Belongs to the tetrahydrofolate dehydrogenase/cyclohydrolase family.</text>
</comment>
<keyword id="KW-0028">Amino-acid biosynthesis</keyword>
<keyword id="KW-0368">Histidine biosynthesis</keyword>
<keyword id="KW-0378">Hydrolase</keyword>
<keyword id="KW-0486">Methionine biosynthesis</keyword>
<keyword id="KW-0511">Multifunctional enzyme</keyword>
<keyword id="KW-0521">NADP</keyword>
<keyword id="KW-0554">One-carbon metabolism</keyword>
<keyword id="KW-0560">Oxidoreductase</keyword>
<keyword id="KW-0658">Purine biosynthesis</keyword>
<keyword id="KW-1185">Reference proteome</keyword>
<proteinExistence type="inferred from homology"/>
<sequence length="293" mass="31646">MTLIDGKAISEQVKQEIAAEVAEIVARGGKRPHLAAILVGHDGGSETYVAAKVKACEVCGFKSSLIRYESDVTEEELLAKVRELNNDDDVDGFIVQLPLPKHISEQKVIETIDYRKDVDGFHPINVGRMSIGLPCYVSATPNGILELLKRYEIETSGKKCVVLGRSNIVGKPMASLMMQKAYPGDATVTVCHSRSKDLVKECQEADIIIAALGQPNFVKEEMVKEGAVVIDVGTTRVPDASKKSGFKLTGDVKFDEVAPKCSFITPVPGGVGPMTIVSLMKNTLLAGKKAIYK</sequence>
<accession>Q8A7B8</accession>